<reference key="1">
    <citation type="journal article" date="1997" name="Gene">
        <title>Organization of a large gene cluster encoding ribosomal proteins in the cyanobacterium Synechococcus sp. strain PCC 6301: comparison of gene clusters among cyanobacteria, eubacteria and chloroplast genomes.</title>
        <authorList>
            <person name="Sugita M."/>
            <person name="Sugishita H."/>
            <person name="Fujishiro T."/>
            <person name="Tsuboi M."/>
            <person name="Sugita C."/>
            <person name="Endo T."/>
            <person name="Sugiura M."/>
        </authorList>
    </citation>
    <scope>NUCLEOTIDE SEQUENCE [GENOMIC DNA]</scope>
</reference>
<reference key="2">
    <citation type="journal article" date="2007" name="Photosyn. Res.">
        <title>Complete nucleotide sequence of the freshwater unicellular cyanobacterium Synechococcus elongatus PCC 6301 chromosome: gene content and organization.</title>
        <authorList>
            <person name="Sugita C."/>
            <person name="Ogata K."/>
            <person name="Shikata M."/>
            <person name="Jikuya H."/>
            <person name="Takano J."/>
            <person name="Furumichi M."/>
            <person name="Kanehisa M."/>
            <person name="Omata T."/>
            <person name="Sugiura M."/>
            <person name="Sugita M."/>
        </authorList>
    </citation>
    <scope>NUCLEOTIDE SEQUENCE [LARGE SCALE GENOMIC DNA]</scope>
    <source>
        <strain>ATCC 27144 / PCC 6301 / SAUG 1402/1</strain>
    </source>
</reference>
<accession>O24701</accession>
<sequence length="179" mass="20016">MSLKTKYRDIIVPKLMKEFGYTNIHQVPKVVKVTINRGLGEGAQNAKALESSLAEIAKIAGQKPVVTRAKKAIAGFKIRAGMPVGLMVTLRGDRRDAFLERLINLSLPRIRDFRGISPRSFDGRGNYTLGLREQLIFPEITYDSIDQIRGMDITIVTSANSDEEGRALLRELGMPFREN</sequence>
<evidence type="ECO:0000255" key="1">
    <source>
        <dbReference type="HAMAP-Rule" id="MF_01333"/>
    </source>
</evidence>
<evidence type="ECO:0000305" key="2"/>
<comment type="function">
    <text evidence="1">This is one of the proteins that bind and probably mediate the attachment of the 5S RNA into the large ribosomal subunit, where it forms part of the central protuberance. In the 70S ribosome it contacts protein S13 of the 30S subunit (bridge B1b), connecting the 2 subunits; this bridge is implicated in subunit movement. Contacts the P site tRNA; the 5S rRNA and some of its associated proteins might help stabilize positioning of ribosome-bound tRNAs.</text>
</comment>
<comment type="subunit">
    <text evidence="1">Part of the 50S ribosomal subunit; part of the 5S rRNA/L5/L18/L25 subcomplex. Contacts the 5S rRNA and the P site tRNA. Forms a bridge to the 30S subunit in the 70S ribosome.</text>
</comment>
<comment type="similarity">
    <text evidence="1">Belongs to the universal ribosomal protein uL5 family.</text>
</comment>
<protein>
    <recommendedName>
        <fullName evidence="1">Large ribosomal subunit protein uL5</fullName>
    </recommendedName>
    <alternativeName>
        <fullName evidence="2">50S ribosomal protein L5</fullName>
    </alternativeName>
</protein>
<keyword id="KW-0687">Ribonucleoprotein</keyword>
<keyword id="KW-0689">Ribosomal protein</keyword>
<keyword id="KW-0694">RNA-binding</keyword>
<keyword id="KW-0699">rRNA-binding</keyword>
<keyword id="KW-0820">tRNA-binding</keyword>
<dbReference type="EMBL" id="AB000111">
    <property type="protein sequence ID" value="BAA22461.1"/>
    <property type="molecule type" value="Genomic_DNA"/>
</dbReference>
<dbReference type="EMBL" id="AP008231">
    <property type="protein sequence ID" value="BAD80067.1"/>
    <property type="molecule type" value="Genomic_DNA"/>
</dbReference>
<dbReference type="RefSeq" id="WP_011244187.1">
    <property type="nucleotide sequence ID" value="NZ_CP085785.1"/>
</dbReference>
<dbReference type="SMR" id="O24701"/>
<dbReference type="GeneID" id="72431103"/>
<dbReference type="KEGG" id="syc:syc1877_d"/>
<dbReference type="eggNOG" id="COG0094">
    <property type="taxonomic scope" value="Bacteria"/>
</dbReference>
<dbReference type="Proteomes" id="UP000001175">
    <property type="component" value="Chromosome"/>
</dbReference>
<dbReference type="GO" id="GO:1990904">
    <property type="term" value="C:ribonucleoprotein complex"/>
    <property type="evidence" value="ECO:0007669"/>
    <property type="project" value="UniProtKB-KW"/>
</dbReference>
<dbReference type="GO" id="GO:0005840">
    <property type="term" value="C:ribosome"/>
    <property type="evidence" value="ECO:0007669"/>
    <property type="project" value="UniProtKB-KW"/>
</dbReference>
<dbReference type="GO" id="GO:0019843">
    <property type="term" value="F:rRNA binding"/>
    <property type="evidence" value="ECO:0007669"/>
    <property type="project" value="UniProtKB-UniRule"/>
</dbReference>
<dbReference type="GO" id="GO:0003735">
    <property type="term" value="F:structural constituent of ribosome"/>
    <property type="evidence" value="ECO:0007669"/>
    <property type="project" value="InterPro"/>
</dbReference>
<dbReference type="GO" id="GO:0000049">
    <property type="term" value="F:tRNA binding"/>
    <property type="evidence" value="ECO:0007669"/>
    <property type="project" value="UniProtKB-UniRule"/>
</dbReference>
<dbReference type="GO" id="GO:0006412">
    <property type="term" value="P:translation"/>
    <property type="evidence" value="ECO:0007669"/>
    <property type="project" value="UniProtKB-UniRule"/>
</dbReference>
<dbReference type="FunFam" id="3.30.1440.10:FF:000001">
    <property type="entry name" value="50S ribosomal protein L5"/>
    <property type="match status" value="1"/>
</dbReference>
<dbReference type="Gene3D" id="3.30.1440.10">
    <property type="match status" value="1"/>
</dbReference>
<dbReference type="HAMAP" id="MF_01333_B">
    <property type="entry name" value="Ribosomal_uL5_B"/>
    <property type="match status" value="1"/>
</dbReference>
<dbReference type="InterPro" id="IPR002132">
    <property type="entry name" value="Ribosomal_uL5"/>
</dbReference>
<dbReference type="InterPro" id="IPR020930">
    <property type="entry name" value="Ribosomal_uL5_bac-type"/>
</dbReference>
<dbReference type="InterPro" id="IPR031309">
    <property type="entry name" value="Ribosomal_uL5_C"/>
</dbReference>
<dbReference type="InterPro" id="IPR020929">
    <property type="entry name" value="Ribosomal_uL5_CS"/>
</dbReference>
<dbReference type="InterPro" id="IPR022803">
    <property type="entry name" value="Ribosomal_uL5_dom_sf"/>
</dbReference>
<dbReference type="InterPro" id="IPR031310">
    <property type="entry name" value="Ribosomal_uL5_N"/>
</dbReference>
<dbReference type="NCBIfam" id="NF000585">
    <property type="entry name" value="PRK00010.1"/>
    <property type="match status" value="1"/>
</dbReference>
<dbReference type="PANTHER" id="PTHR11994">
    <property type="entry name" value="60S RIBOSOMAL PROTEIN L11-RELATED"/>
    <property type="match status" value="1"/>
</dbReference>
<dbReference type="Pfam" id="PF00281">
    <property type="entry name" value="Ribosomal_L5"/>
    <property type="match status" value="1"/>
</dbReference>
<dbReference type="Pfam" id="PF00673">
    <property type="entry name" value="Ribosomal_L5_C"/>
    <property type="match status" value="1"/>
</dbReference>
<dbReference type="PIRSF" id="PIRSF002161">
    <property type="entry name" value="Ribosomal_L5"/>
    <property type="match status" value="1"/>
</dbReference>
<dbReference type="SUPFAM" id="SSF55282">
    <property type="entry name" value="RL5-like"/>
    <property type="match status" value="1"/>
</dbReference>
<dbReference type="PROSITE" id="PS00358">
    <property type="entry name" value="RIBOSOMAL_L5"/>
    <property type="match status" value="1"/>
</dbReference>
<feature type="chain" id="PRO_0000125008" description="Large ribosomal subunit protein uL5">
    <location>
        <begin position="1"/>
        <end position="179"/>
    </location>
</feature>
<name>RL5_SYNP6</name>
<organism>
    <name type="scientific">Synechococcus sp. (strain ATCC 27144 / PCC 6301 / SAUG 1402/1)</name>
    <name type="common">Anacystis nidulans</name>
    <dbReference type="NCBI Taxonomy" id="269084"/>
    <lineage>
        <taxon>Bacteria</taxon>
        <taxon>Bacillati</taxon>
        <taxon>Cyanobacteriota</taxon>
        <taxon>Cyanophyceae</taxon>
        <taxon>Synechococcales</taxon>
        <taxon>Synechococcaceae</taxon>
        <taxon>Synechococcus</taxon>
    </lineage>
</organism>
<gene>
    <name evidence="1" type="primary">rplE</name>
    <name evidence="1" type="synonym">rpl5</name>
    <name type="ordered locus">syc1877_d</name>
</gene>
<proteinExistence type="inferred from homology"/>